<reference key="1">
    <citation type="journal article" date="2006" name="Proc. Natl. Acad. Sci. U.S.A.">
        <title>Genome sequence of Synechococcus CC9311: insights into adaptation to a coastal environment.</title>
        <authorList>
            <person name="Palenik B."/>
            <person name="Ren Q."/>
            <person name="Dupont C.L."/>
            <person name="Myers G.S."/>
            <person name="Heidelberg J.F."/>
            <person name="Badger J.H."/>
            <person name="Madupu R."/>
            <person name="Nelson W.C."/>
            <person name="Brinkac L.M."/>
            <person name="Dodson R.J."/>
            <person name="Durkin A.S."/>
            <person name="Daugherty S.C."/>
            <person name="Sullivan S.A."/>
            <person name="Khouri H."/>
            <person name="Mohamoud Y."/>
            <person name="Halpin R."/>
            <person name="Paulsen I.T."/>
        </authorList>
    </citation>
    <scope>NUCLEOTIDE SEQUENCE [LARGE SCALE GENOMIC DNA]</scope>
    <source>
        <strain>CC9311</strain>
    </source>
</reference>
<dbReference type="EMBL" id="CP000435">
    <property type="protein sequence ID" value="ABI46005.1"/>
    <property type="molecule type" value="Genomic_DNA"/>
</dbReference>
<dbReference type="RefSeq" id="WP_011618404.1">
    <property type="nucleotide sequence ID" value="NC_008319.1"/>
</dbReference>
<dbReference type="SMR" id="Q0ID00"/>
<dbReference type="STRING" id="64471.sync_0443"/>
<dbReference type="KEGG" id="syg:sync_0443"/>
<dbReference type="eggNOG" id="COG0468">
    <property type="taxonomic scope" value="Bacteria"/>
</dbReference>
<dbReference type="HOGENOM" id="CLU_040469_3_2_3"/>
<dbReference type="OrthoDB" id="9776733at2"/>
<dbReference type="Proteomes" id="UP000001961">
    <property type="component" value="Chromosome"/>
</dbReference>
<dbReference type="GO" id="GO:0005829">
    <property type="term" value="C:cytosol"/>
    <property type="evidence" value="ECO:0007669"/>
    <property type="project" value="TreeGrafter"/>
</dbReference>
<dbReference type="GO" id="GO:0005524">
    <property type="term" value="F:ATP binding"/>
    <property type="evidence" value="ECO:0007669"/>
    <property type="project" value="UniProtKB-UniRule"/>
</dbReference>
<dbReference type="GO" id="GO:0016887">
    <property type="term" value="F:ATP hydrolysis activity"/>
    <property type="evidence" value="ECO:0007669"/>
    <property type="project" value="InterPro"/>
</dbReference>
<dbReference type="GO" id="GO:0140664">
    <property type="term" value="F:ATP-dependent DNA damage sensor activity"/>
    <property type="evidence" value="ECO:0007669"/>
    <property type="project" value="InterPro"/>
</dbReference>
<dbReference type="GO" id="GO:0003684">
    <property type="term" value="F:damaged DNA binding"/>
    <property type="evidence" value="ECO:0007669"/>
    <property type="project" value="UniProtKB-UniRule"/>
</dbReference>
<dbReference type="GO" id="GO:0003697">
    <property type="term" value="F:single-stranded DNA binding"/>
    <property type="evidence" value="ECO:0007669"/>
    <property type="project" value="UniProtKB-UniRule"/>
</dbReference>
<dbReference type="GO" id="GO:0006310">
    <property type="term" value="P:DNA recombination"/>
    <property type="evidence" value="ECO:0007669"/>
    <property type="project" value="UniProtKB-UniRule"/>
</dbReference>
<dbReference type="GO" id="GO:0006281">
    <property type="term" value="P:DNA repair"/>
    <property type="evidence" value="ECO:0007669"/>
    <property type="project" value="UniProtKB-UniRule"/>
</dbReference>
<dbReference type="GO" id="GO:0009432">
    <property type="term" value="P:SOS response"/>
    <property type="evidence" value="ECO:0007669"/>
    <property type="project" value="UniProtKB-UniRule"/>
</dbReference>
<dbReference type="CDD" id="cd00983">
    <property type="entry name" value="RecA"/>
    <property type="match status" value="1"/>
</dbReference>
<dbReference type="FunFam" id="3.40.50.300:FF:000087">
    <property type="entry name" value="Recombinase RecA"/>
    <property type="match status" value="1"/>
</dbReference>
<dbReference type="Gene3D" id="3.40.50.300">
    <property type="entry name" value="P-loop containing nucleotide triphosphate hydrolases"/>
    <property type="match status" value="1"/>
</dbReference>
<dbReference type="HAMAP" id="MF_00268">
    <property type="entry name" value="RecA"/>
    <property type="match status" value="1"/>
</dbReference>
<dbReference type="InterPro" id="IPR003593">
    <property type="entry name" value="AAA+_ATPase"/>
</dbReference>
<dbReference type="InterPro" id="IPR013765">
    <property type="entry name" value="DNA_recomb/repair_RecA"/>
</dbReference>
<dbReference type="InterPro" id="IPR020584">
    <property type="entry name" value="DNA_recomb/repair_RecA_CS"/>
</dbReference>
<dbReference type="InterPro" id="IPR027417">
    <property type="entry name" value="P-loop_NTPase"/>
</dbReference>
<dbReference type="InterPro" id="IPR049261">
    <property type="entry name" value="RecA-like_C"/>
</dbReference>
<dbReference type="InterPro" id="IPR049428">
    <property type="entry name" value="RecA-like_N"/>
</dbReference>
<dbReference type="InterPro" id="IPR020588">
    <property type="entry name" value="RecA_ATP-bd"/>
</dbReference>
<dbReference type="InterPro" id="IPR023400">
    <property type="entry name" value="RecA_C_sf"/>
</dbReference>
<dbReference type="InterPro" id="IPR020587">
    <property type="entry name" value="RecA_monomer-monomer_interface"/>
</dbReference>
<dbReference type="NCBIfam" id="TIGR02012">
    <property type="entry name" value="tigrfam_recA"/>
    <property type="match status" value="1"/>
</dbReference>
<dbReference type="PANTHER" id="PTHR45900:SF1">
    <property type="entry name" value="MITOCHONDRIAL DNA REPAIR PROTEIN RECA HOMOLOG-RELATED"/>
    <property type="match status" value="1"/>
</dbReference>
<dbReference type="PANTHER" id="PTHR45900">
    <property type="entry name" value="RECA"/>
    <property type="match status" value="1"/>
</dbReference>
<dbReference type="Pfam" id="PF00154">
    <property type="entry name" value="RecA"/>
    <property type="match status" value="1"/>
</dbReference>
<dbReference type="Pfam" id="PF21096">
    <property type="entry name" value="RecA_C"/>
    <property type="match status" value="1"/>
</dbReference>
<dbReference type="PRINTS" id="PR00142">
    <property type="entry name" value="RECA"/>
</dbReference>
<dbReference type="SMART" id="SM00382">
    <property type="entry name" value="AAA"/>
    <property type="match status" value="1"/>
</dbReference>
<dbReference type="SUPFAM" id="SSF52540">
    <property type="entry name" value="P-loop containing nucleoside triphosphate hydrolases"/>
    <property type="match status" value="1"/>
</dbReference>
<dbReference type="SUPFAM" id="SSF54752">
    <property type="entry name" value="RecA protein, C-terminal domain"/>
    <property type="match status" value="1"/>
</dbReference>
<dbReference type="PROSITE" id="PS00321">
    <property type="entry name" value="RECA_1"/>
    <property type="match status" value="1"/>
</dbReference>
<dbReference type="PROSITE" id="PS50162">
    <property type="entry name" value="RECA_2"/>
    <property type="match status" value="1"/>
</dbReference>
<dbReference type="PROSITE" id="PS50163">
    <property type="entry name" value="RECA_3"/>
    <property type="match status" value="1"/>
</dbReference>
<sequence>MPADVKAAQSSAGDSRPGERDKALDLVLGQIERNFGKGSIMRLGDASRMRVETISTGALTLDLALGGGYPKGRVVEVYGPESSGKTTLTLHAIAEVQKRGGVAAFVDAEHALDPVYAASLGVDIENLLVSQPDTGEMALEIVDQLVRSAAVDIVVVDSVAALTPRAEIEGEMGDLAVGAQARLMSQAMRKITGNIGKSGCTVIFLNQLRLKIGVTYGNPETTTGGNALKFYASVRLDIRRIQTLKRGTEEYGIRAKVKVAKNKVAPPFRIAEFDILFGRGISTLGCVLDLAEETGVVTRKGAWYSYEGDNIGQGRDNTIGWLEQNPEAKDAIEVLVRQKLTEGSEVTANSMRPLAAAARSAAAKPSAKTADTDKKLVADGAA</sequence>
<name>RECA_SYNS3</name>
<comment type="function">
    <text evidence="1">Can catalyze the hydrolysis of ATP in the presence of single-stranded DNA, the ATP-dependent uptake of single-stranded DNA by duplex DNA, and the ATP-dependent hybridization of homologous single-stranded DNAs. It interacts with LexA causing its activation and leading to its autocatalytic cleavage.</text>
</comment>
<comment type="subcellular location">
    <subcellularLocation>
        <location evidence="1">Cytoplasm</location>
    </subcellularLocation>
</comment>
<comment type="similarity">
    <text evidence="1">Belongs to the RecA family.</text>
</comment>
<evidence type="ECO:0000255" key="1">
    <source>
        <dbReference type="HAMAP-Rule" id="MF_00268"/>
    </source>
</evidence>
<evidence type="ECO:0000256" key="2">
    <source>
        <dbReference type="SAM" id="MobiDB-lite"/>
    </source>
</evidence>
<gene>
    <name evidence="1" type="primary">recA</name>
    <name type="ordered locus">sync_0443</name>
</gene>
<accession>Q0ID00</accession>
<protein>
    <recommendedName>
        <fullName evidence="1">Protein RecA</fullName>
    </recommendedName>
    <alternativeName>
        <fullName evidence="1">Recombinase A</fullName>
    </alternativeName>
</protein>
<keyword id="KW-0067">ATP-binding</keyword>
<keyword id="KW-0963">Cytoplasm</keyword>
<keyword id="KW-0227">DNA damage</keyword>
<keyword id="KW-0233">DNA recombination</keyword>
<keyword id="KW-0234">DNA repair</keyword>
<keyword id="KW-0238">DNA-binding</keyword>
<keyword id="KW-0547">Nucleotide-binding</keyword>
<keyword id="KW-1185">Reference proteome</keyword>
<keyword id="KW-0742">SOS response</keyword>
<organism>
    <name type="scientific">Synechococcus sp. (strain CC9311)</name>
    <dbReference type="NCBI Taxonomy" id="64471"/>
    <lineage>
        <taxon>Bacteria</taxon>
        <taxon>Bacillati</taxon>
        <taxon>Cyanobacteriota</taxon>
        <taxon>Cyanophyceae</taxon>
        <taxon>Synechococcales</taxon>
        <taxon>Synechococcaceae</taxon>
        <taxon>Synechococcus</taxon>
    </lineage>
</organism>
<proteinExistence type="inferred from homology"/>
<feature type="chain" id="PRO_1000048024" description="Protein RecA">
    <location>
        <begin position="1"/>
        <end position="382"/>
    </location>
</feature>
<feature type="region of interest" description="Disordered" evidence="2">
    <location>
        <begin position="1"/>
        <end position="20"/>
    </location>
</feature>
<feature type="region of interest" description="Disordered" evidence="2">
    <location>
        <begin position="360"/>
        <end position="382"/>
    </location>
</feature>
<feature type="compositionally biased region" description="Low complexity" evidence="2">
    <location>
        <begin position="360"/>
        <end position="369"/>
    </location>
</feature>
<feature type="compositionally biased region" description="Basic and acidic residues" evidence="2">
    <location>
        <begin position="370"/>
        <end position="382"/>
    </location>
</feature>
<feature type="binding site" evidence="1">
    <location>
        <begin position="79"/>
        <end position="86"/>
    </location>
    <ligand>
        <name>ATP</name>
        <dbReference type="ChEBI" id="CHEBI:30616"/>
    </ligand>
</feature>